<evidence type="ECO:0000250" key="1">
    <source>
        <dbReference type="UniProtKB" id="B2HSU8"/>
    </source>
</evidence>
<evidence type="ECO:0000250" key="2">
    <source>
        <dbReference type="UniProtKB" id="P9WJE5"/>
    </source>
</evidence>
<evidence type="ECO:0000255" key="3"/>
<evidence type="ECO:0000269" key="4">
    <source>
    </source>
</evidence>
<evidence type="ECO:0000269" key="5">
    <source>
    </source>
</evidence>
<evidence type="ECO:0000303" key="6">
    <source>
    </source>
</evidence>
<evidence type="ECO:0000305" key="7"/>
<evidence type="ECO:0000312" key="8">
    <source>
        <dbReference type="EMBL" id="ABK73896.1"/>
    </source>
</evidence>
<evidence type="ECO:0000312" key="9">
    <source>
        <dbReference type="EMBL" id="AFP37090.1"/>
    </source>
</evidence>
<dbReference type="EMBL" id="CP000480">
    <property type="protein sequence ID" value="ABK73896.1"/>
    <property type="molecule type" value="Genomic_DNA"/>
</dbReference>
<dbReference type="EMBL" id="CP001663">
    <property type="protein sequence ID" value="AFP37090.1"/>
    <property type="molecule type" value="Genomic_DNA"/>
</dbReference>
<dbReference type="RefSeq" id="YP_885036.1">
    <property type="nucleotide sequence ID" value="NC_008596.1"/>
</dbReference>
<dbReference type="PDB" id="6LAR">
    <property type="method" value="EM"/>
    <property type="resolution" value="3.70 A"/>
    <property type="chains" value="D/G=1-309"/>
</dbReference>
<dbReference type="PDB" id="6SGW">
    <property type="method" value="EM"/>
    <property type="resolution" value="3.80 A"/>
    <property type="chains" value="D/G=1-285"/>
</dbReference>
<dbReference type="PDB" id="6SGX">
    <property type="method" value="EM"/>
    <property type="resolution" value="3.70 A"/>
    <property type="chains" value="G=1-285"/>
</dbReference>
<dbReference type="PDB" id="6SGZ">
    <property type="method" value="EM"/>
    <property type="resolution" value="3.90 A"/>
    <property type="chains" value="D=2-287"/>
</dbReference>
<dbReference type="PDB" id="6UMM">
    <property type="method" value="EM"/>
    <property type="resolution" value="3.70 A"/>
    <property type="chains" value="A/F=1-285"/>
</dbReference>
<dbReference type="PDBsum" id="6LAR"/>
<dbReference type="PDBsum" id="6SGW"/>
<dbReference type="PDBsum" id="6SGX"/>
<dbReference type="PDBsum" id="6SGZ"/>
<dbReference type="PDBsum" id="6UMM"/>
<dbReference type="EMDB" id="EMD-0862"/>
<dbReference type="EMDB" id="EMD-10186"/>
<dbReference type="EMDB" id="EMD-10187"/>
<dbReference type="EMDB" id="EMD-10189"/>
<dbReference type="EMDB" id="EMD-10190"/>
<dbReference type="EMDB" id="EMD-10191"/>
<dbReference type="EMDB" id="EMD-20820"/>
<dbReference type="SMR" id="A0QQ48"/>
<dbReference type="STRING" id="246196.MSMEG_0626"/>
<dbReference type="PaxDb" id="246196-MSMEI_0609"/>
<dbReference type="KEGG" id="msb:LJ00_03105"/>
<dbReference type="KEGG" id="msg:MSMEI_0609"/>
<dbReference type="KEGG" id="msm:MSMEG_0626"/>
<dbReference type="PATRIC" id="fig|246196.19.peg.621"/>
<dbReference type="eggNOG" id="ENOG5031E1N">
    <property type="taxonomic scope" value="Bacteria"/>
</dbReference>
<dbReference type="OrthoDB" id="4760969at2"/>
<dbReference type="Proteomes" id="UP000000757">
    <property type="component" value="Chromosome"/>
</dbReference>
<dbReference type="Proteomes" id="UP000006158">
    <property type="component" value="Chromosome"/>
</dbReference>
<dbReference type="GO" id="GO:0005886">
    <property type="term" value="C:plasma membrane"/>
    <property type="evidence" value="ECO:0007669"/>
    <property type="project" value="UniProtKB-SubCell"/>
</dbReference>
<dbReference type="InterPro" id="IPR050051">
    <property type="entry name" value="EccE_dom"/>
</dbReference>
<dbReference type="InterPro" id="IPR021368">
    <property type="entry name" value="T7SS_EccE"/>
</dbReference>
<dbReference type="NCBIfam" id="TIGR03923">
    <property type="entry name" value="T7SS_EccE"/>
    <property type="match status" value="1"/>
</dbReference>
<dbReference type="Pfam" id="PF11203">
    <property type="entry name" value="EccE"/>
    <property type="match status" value="1"/>
</dbReference>
<protein>
    <recommendedName>
        <fullName evidence="2">ESX-3 secretion system protein EccE3</fullName>
    </recommendedName>
    <alternativeName>
        <fullName evidence="2">ESX conserved component E3</fullName>
    </alternativeName>
    <alternativeName>
        <fullName evidence="2">Type VII secretion system protein EccE3</fullName>
        <shortName evidence="2">T7SS protein EccE3</shortName>
    </alternativeName>
</protein>
<reference key="1">
    <citation type="submission" date="2006-10" db="EMBL/GenBank/DDBJ databases">
        <authorList>
            <person name="Fleischmann R.D."/>
            <person name="Dodson R.J."/>
            <person name="Haft D.H."/>
            <person name="Merkel J.S."/>
            <person name="Nelson W.C."/>
            <person name="Fraser C.M."/>
        </authorList>
    </citation>
    <scope>NUCLEOTIDE SEQUENCE [LARGE SCALE GENOMIC DNA]</scope>
    <source>
        <strain>ATCC 700084 / mc(2)155</strain>
    </source>
</reference>
<reference key="2">
    <citation type="journal article" date="2007" name="Genome Biol.">
        <title>Interrupted coding sequences in Mycobacterium smegmatis: authentic mutations or sequencing errors?</title>
        <authorList>
            <person name="Deshayes C."/>
            <person name="Perrodou E."/>
            <person name="Gallien S."/>
            <person name="Euphrasie D."/>
            <person name="Schaeffer C."/>
            <person name="Van-Dorsselaer A."/>
            <person name="Poch O."/>
            <person name="Lecompte O."/>
            <person name="Reyrat J.-M."/>
        </authorList>
    </citation>
    <scope>NUCLEOTIDE SEQUENCE [LARGE SCALE GENOMIC DNA]</scope>
    <source>
        <strain>ATCC 700084 / mc(2)155</strain>
    </source>
</reference>
<reference key="3">
    <citation type="journal article" date="2009" name="Genome Res.">
        <title>Ortho-proteogenomics: multiple proteomes investigation through orthology and a new MS-based protocol.</title>
        <authorList>
            <person name="Gallien S."/>
            <person name="Perrodou E."/>
            <person name="Carapito C."/>
            <person name="Deshayes C."/>
            <person name="Reyrat J.-M."/>
            <person name="Van Dorsselaer A."/>
            <person name="Poch O."/>
            <person name="Schaeffer C."/>
            <person name="Lecompte O."/>
        </authorList>
    </citation>
    <scope>NUCLEOTIDE SEQUENCE [LARGE SCALE GENOMIC DNA]</scope>
    <source>
        <strain>ATCC 700084 / mc(2)155</strain>
    </source>
</reference>
<reference key="4">
    <citation type="journal article" date="2009" name="Proc. Natl. Acad. Sci. U.S.A.">
        <title>Mycobacterial Esx-3 is required for mycobactin-mediated iron acquisition.</title>
        <authorList>
            <person name="Siegrist M.S."/>
            <person name="Unnikrishnan M."/>
            <person name="McConnell M.J."/>
            <person name="Borowsky M."/>
            <person name="Cheng T.Y."/>
            <person name="Siddiqi N."/>
            <person name="Fortune S.M."/>
            <person name="Moody D.B."/>
            <person name="Rubin E.J."/>
        </authorList>
    </citation>
    <scope>FUNCTION</scope>
</reference>
<reference key="5">
    <citation type="journal article" date="2014" name="MBio">
        <title>Mycobacterial Esx-3 requires multiple components for iron acquisition.</title>
        <authorList>
            <person name="Siegrist M.S."/>
            <person name="Steigedal M."/>
            <person name="Ahmad R."/>
            <person name="Mehra A."/>
            <person name="Dragset M.S."/>
            <person name="Schuster B.M."/>
            <person name="Philips J.A."/>
            <person name="Carr S.A."/>
            <person name="Rubin E.J."/>
        </authorList>
    </citation>
    <scope>FUNCTION</scope>
</reference>
<organism>
    <name type="scientific">Mycolicibacterium smegmatis (strain ATCC 700084 / mc(2)155)</name>
    <name type="common">Mycobacterium smegmatis</name>
    <dbReference type="NCBI Taxonomy" id="246196"/>
    <lineage>
        <taxon>Bacteria</taxon>
        <taxon>Bacillati</taxon>
        <taxon>Actinomycetota</taxon>
        <taxon>Actinomycetes</taxon>
        <taxon>Mycobacteriales</taxon>
        <taxon>Mycobacteriaceae</taxon>
        <taxon>Mycolicibacterium</taxon>
    </lineage>
</organism>
<accession>A0QQ48</accession>
<proteinExistence type="evidence at protein level"/>
<name>ECCE3_MYCS2</name>
<keyword id="KW-0002">3D-structure</keyword>
<keyword id="KW-0997">Cell inner membrane</keyword>
<keyword id="KW-1003">Cell membrane</keyword>
<keyword id="KW-0472">Membrane</keyword>
<keyword id="KW-1185">Reference proteome</keyword>
<keyword id="KW-0812">Transmembrane</keyword>
<keyword id="KW-1133">Transmembrane helix</keyword>
<keyword id="KW-0813">Transport</keyword>
<sequence length="309" mass="33185">MTARIALASLFVVAAVLAQPWQTTTQRWVLGVSIAAVIVLLAWWKGMFLTTRIGRALAMVRRNRAEDTVETDAHRATVVLRVDPAAPAQLPVVVGYLDRYGITCDKVRITHRDAGGTRRSWISLTVDAVDNLAALQARSARIPLQDTTEVVGRRLADHLREQGWTVTVVEGVDTPLPVSGKETWRGVADDAGVVAAYRVKVDDRLDEVLAEIGHLPAEETWTALEFTGSPAEPLLTVCAAVRTSDRPAAKAPLAGLTPARGRHRPALAALNPLSTERLDGTAVPLPAVVRTSVKGSVEHEAAQEAGHPA</sequence>
<gene>
    <name evidence="6" type="primary">eccE3</name>
    <name evidence="8" type="ordered locus">MSMEG_0626</name>
    <name evidence="9" type="ordered locus">MSMEI_0609</name>
</gene>
<feature type="chain" id="PRO_0000434993" description="ESX-3 secretion system protein EccE3">
    <location>
        <begin position="1"/>
        <end position="309"/>
    </location>
</feature>
<feature type="transmembrane region" description="Helical" evidence="3">
    <location>
        <begin position="5"/>
        <end position="25"/>
    </location>
</feature>
<feature type="transmembrane region" description="Helical" evidence="3">
    <location>
        <begin position="29"/>
        <end position="49"/>
    </location>
</feature>
<comment type="function">
    <text evidence="4 5">Part of the ESX-3 specialized secretion system, which is required for siderophore-mediated iron acquisition and for the secretion of EsxH and EsxG.</text>
</comment>
<comment type="subunit">
    <text evidence="1">Part of the ESX-3 / type VII secretion system (T7SS), which is composed of cytosolic and membrane components. The ESX-3 membrane complex is composed of EccB3, EccC3, EccD3 and EccE3.</text>
</comment>
<comment type="subcellular location">
    <subcellularLocation>
        <location evidence="1">Cell inner membrane</location>
        <topology evidence="3">Multi-pass membrane protein</topology>
    </subcellularLocation>
</comment>
<comment type="similarity">
    <text evidence="7">Belongs to the EccE family.</text>
</comment>